<dbReference type="EC" id="2.3.1.234" evidence="1"/>
<dbReference type="EMBL" id="AE014074">
    <property type="protein sequence ID" value="AAM80223.1"/>
    <property type="molecule type" value="Genomic_DNA"/>
</dbReference>
<dbReference type="RefSeq" id="WP_002988178.1">
    <property type="nucleotide sequence ID" value="NC_004070.1"/>
</dbReference>
<dbReference type="SMR" id="P0DD28"/>
<dbReference type="GeneID" id="69900251"/>
<dbReference type="KEGG" id="spg:SpyM3_1616"/>
<dbReference type="HOGENOM" id="CLU_023208_0_2_9"/>
<dbReference type="Proteomes" id="UP000000564">
    <property type="component" value="Chromosome"/>
</dbReference>
<dbReference type="GO" id="GO:0005737">
    <property type="term" value="C:cytoplasm"/>
    <property type="evidence" value="ECO:0007669"/>
    <property type="project" value="UniProtKB-SubCell"/>
</dbReference>
<dbReference type="GO" id="GO:0005506">
    <property type="term" value="F:iron ion binding"/>
    <property type="evidence" value="ECO:0007669"/>
    <property type="project" value="UniProtKB-UniRule"/>
</dbReference>
<dbReference type="GO" id="GO:0061711">
    <property type="term" value="F:N(6)-L-threonylcarbamoyladenine synthase activity"/>
    <property type="evidence" value="ECO:0007669"/>
    <property type="project" value="UniProtKB-EC"/>
</dbReference>
<dbReference type="GO" id="GO:0002949">
    <property type="term" value="P:tRNA threonylcarbamoyladenosine modification"/>
    <property type="evidence" value="ECO:0007669"/>
    <property type="project" value="UniProtKB-UniRule"/>
</dbReference>
<dbReference type="CDD" id="cd24133">
    <property type="entry name" value="ASKHA_NBD_TsaD_bac"/>
    <property type="match status" value="1"/>
</dbReference>
<dbReference type="FunFam" id="3.30.420.40:FF:000012">
    <property type="entry name" value="tRNA N6-adenosine threonylcarbamoyltransferase"/>
    <property type="match status" value="1"/>
</dbReference>
<dbReference type="FunFam" id="3.30.420.40:FF:000040">
    <property type="entry name" value="tRNA N6-adenosine threonylcarbamoyltransferase"/>
    <property type="match status" value="1"/>
</dbReference>
<dbReference type="Gene3D" id="3.30.420.40">
    <property type="match status" value="2"/>
</dbReference>
<dbReference type="HAMAP" id="MF_01445">
    <property type="entry name" value="TsaD"/>
    <property type="match status" value="1"/>
</dbReference>
<dbReference type="InterPro" id="IPR043129">
    <property type="entry name" value="ATPase_NBD"/>
</dbReference>
<dbReference type="InterPro" id="IPR000905">
    <property type="entry name" value="Gcp-like_dom"/>
</dbReference>
<dbReference type="InterPro" id="IPR017861">
    <property type="entry name" value="KAE1/TsaD"/>
</dbReference>
<dbReference type="InterPro" id="IPR022450">
    <property type="entry name" value="TsaD"/>
</dbReference>
<dbReference type="NCBIfam" id="TIGR00329">
    <property type="entry name" value="gcp_kae1"/>
    <property type="match status" value="1"/>
</dbReference>
<dbReference type="NCBIfam" id="TIGR03723">
    <property type="entry name" value="T6A_TsaD_YgjD"/>
    <property type="match status" value="1"/>
</dbReference>
<dbReference type="PANTHER" id="PTHR11735">
    <property type="entry name" value="TRNA N6-ADENOSINE THREONYLCARBAMOYLTRANSFERASE"/>
    <property type="match status" value="1"/>
</dbReference>
<dbReference type="PANTHER" id="PTHR11735:SF6">
    <property type="entry name" value="TRNA N6-ADENOSINE THREONYLCARBAMOYLTRANSFERASE, MITOCHONDRIAL"/>
    <property type="match status" value="1"/>
</dbReference>
<dbReference type="Pfam" id="PF00814">
    <property type="entry name" value="TsaD"/>
    <property type="match status" value="1"/>
</dbReference>
<dbReference type="PRINTS" id="PR00789">
    <property type="entry name" value="OSIALOPTASE"/>
</dbReference>
<dbReference type="SUPFAM" id="SSF53067">
    <property type="entry name" value="Actin-like ATPase domain"/>
    <property type="match status" value="1"/>
</dbReference>
<feature type="chain" id="PRO_0000303570" description="tRNA N6-adenosine threonylcarbamoyltransferase">
    <location>
        <begin position="1"/>
        <end position="342"/>
    </location>
</feature>
<feature type="binding site" evidence="1">
    <location>
        <position position="114"/>
    </location>
    <ligand>
        <name>Fe cation</name>
        <dbReference type="ChEBI" id="CHEBI:24875"/>
    </ligand>
</feature>
<feature type="binding site" evidence="1">
    <location>
        <position position="118"/>
    </location>
    <ligand>
        <name>Fe cation</name>
        <dbReference type="ChEBI" id="CHEBI:24875"/>
    </ligand>
</feature>
<feature type="binding site" evidence="1">
    <location>
        <begin position="136"/>
        <end position="140"/>
    </location>
    <ligand>
        <name>substrate</name>
    </ligand>
</feature>
<feature type="binding site" evidence="1">
    <location>
        <position position="169"/>
    </location>
    <ligand>
        <name>substrate</name>
    </ligand>
</feature>
<feature type="binding site" evidence="1">
    <location>
        <position position="182"/>
    </location>
    <ligand>
        <name>substrate</name>
    </ligand>
</feature>
<feature type="binding site" evidence="1">
    <location>
        <position position="186"/>
    </location>
    <ligand>
        <name>substrate</name>
    </ligand>
</feature>
<feature type="binding site" evidence="1">
    <location>
        <position position="275"/>
    </location>
    <ligand>
        <name>substrate</name>
    </ligand>
</feature>
<feature type="binding site" evidence="1">
    <location>
        <position position="301"/>
    </location>
    <ligand>
        <name>Fe cation</name>
        <dbReference type="ChEBI" id="CHEBI:24875"/>
    </ligand>
</feature>
<evidence type="ECO:0000255" key="1">
    <source>
        <dbReference type="HAMAP-Rule" id="MF_01445"/>
    </source>
</evidence>
<reference key="1">
    <citation type="journal article" date="2002" name="Proc. Natl. Acad. Sci. U.S.A.">
        <title>Genome sequence of a serotype M3 strain of group A Streptococcus: phage-encoded toxins, the high-virulence phenotype, and clone emergence.</title>
        <authorList>
            <person name="Beres S.B."/>
            <person name="Sylva G.L."/>
            <person name="Barbian K.D."/>
            <person name="Lei B."/>
            <person name="Hoff J.S."/>
            <person name="Mammarella N.D."/>
            <person name="Liu M.-Y."/>
            <person name="Smoot J.C."/>
            <person name="Porcella S.F."/>
            <person name="Parkins L.D."/>
            <person name="Campbell D.S."/>
            <person name="Smith T.M."/>
            <person name="McCormick J.K."/>
            <person name="Leung D.Y.M."/>
            <person name="Schlievert P.M."/>
            <person name="Musser J.M."/>
        </authorList>
    </citation>
    <scope>NUCLEOTIDE SEQUENCE [LARGE SCALE GENOMIC DNA]</scope>
    <source>
        <strain>ATCC BAA-595 / MGAS315</strain>
    </source>
</reference>
<gene>
    <name evidence="1" type="primary">tsaD</name>
    <name type="synonym">gcp</name>
    <name type="ordered locus">SpyM3_1616</name>
</gene>
<organism>
    <name type="scientific">Streptococcus pyogenes serotype M3 (strain ATCC BAA-595 / MGAS315)</name>
    <dbReference type="NCBI Taxonomy" id="198466"/>
    <lineage>
        <taxon>Bacteria</taxon>
        <taxon>Bacillati</taxon>
        <taxon>Bacillota</taxon>
        <taxon>Bacilli</taxon>
        <taxon>Lactobacillales</taxon>
        <taxon>Streptococcaceae</taxon>
        <taxon>Streptococcus</taxon>
    </lineage>
</organism>
<comment type="function">
    <text evidence="1">Required for the formation of a threonylcarbamoyl group on adenosine at position 37 (t(6)A37) in tRNAs that read codons beginning with adenine. Is involved in the transfer of the threonylcarbamoyl moiety of threonylcarbamoyl-AMP (TC-AMP) to the N6 group of A37, together with TsaE and TsaB. TsaD likely plays a direct catalytic role in this reaction.</text>
</comment>
<comment type="catalytic activity">
    <reaction evidence="1">
        <text>L-threonylcarbamoyladenylate + adenosine(37) in tRNA = N(6)-L-threonylcarbamoyladenosine(37) in tRNA + AMP + H(+)</text>
        <dbReference type="Rhea" id="RHEA:37059"/>
        <dbReference type="Rhea" id="RHEA-COMP:10162"/>
        <dbReference type="Rhea" id="RHEA-COMP:10163"/>
        <dbReference type="ChEBI" id="CHEBI:15378"/>
        <dbReference type="ChEBI" id="CHEBI:73682"/>
        <dbReference type="ChEBI" id="CHEBI:74411"/>
        <dbReference type="ChEBI" id="CHEBI:74418"/>
        <dbReference type="ChEBI" id="CHEBI:456215"/>
        <dbReference type="EC" id="2.3.1.234"/>
    </reaction>
</comment>
<comment type="cofactor">
    <cofactor evidence="1">
        <name>Fe(2+)</name>
        <dbReference type="ChEBI" id="CHEBI:29033"/>
    </cofactor>
    <text evidence="1">Binds 1 Fe(2+) ion per subunit.</text>
</comment>
<comment type="subcellular location">
    <subcellularLocation>
        <location evidence="1">Cytoplasm</location>
    </subcellularLocation>
</comment>
<comment type="similarity">
    <text evidence="1">Belongs to the KAE1 / TsaD family.</text>
</comment>
<accession>P0DD28</accession>
<accession>Q79YG7</accession>
<accession>Q7CES0</accession>
<protein>
    <recommendedName>
        <fullName evidence="1">tRNA N6-adenosine threonylcarbamoyltransferase</fullName>
        <ecNumber evidence="1">2.3.1.234</ecNumber>
    </recommendedName>
    <alternativeName>
        <fullName evidence="1">N6-L-threonylcarbamoyladenine synthase</fullName>
        <shortName evidence="1">t(6)A synthase</shortName>
    </alternativeName>
    <alternativeName>
        <fullName evidence="1">t(6)A37 threonylcarbamoyladenosine biosynthesis protein TsaD</fullName>
    </alternativeName>
    <alternativeName>
        <fullName evidence="1">tRNA threonylcarbamoyladenosine biosynthesis protein TsaD</fullName>
    </alternativeName>
</protein>
<proteinExistence type="inferred from homology"/>
<keyword id="KW-0012">Acyltransferase</keyword>
<keyword id="KW-0963">Cytoplasm</keyword>
<keyword id="KW-0408">Iron</keyword>
<keyword id="KW-0479">Metal-binding</keyword>
<keyword id="KW-0808">Transferase</keyword>
<keyword id="KW-0819">tRNA processing</keyword>
<sequence>MTDRYILAVESSCDETSVAILKNESTLLSNVIASQVESHKRFGGVVPEVASRHHVEVITTCFEDALQEAGISASDLSAVAVTYGPGLVGALLVGLAAAKAFAWANHLPLIPVNHMAGHLMAAREQKPLVYPLIALLVSGGHTELVYVPEPGDYHIIGETRDDAVGEAYDKVGRVMGLTYPAGREIDQLAHKGQDTYHFPRAMITEDHLEFSFSGLKSAFINLHHNAKQKGDELILEDLCASFQAAVLDILLAKTKKALSRYPAKMLVVAGGVAANQGLRDRLAQEITHIEVVIPKLRLCGDNAGMIALAAAIEYDKQHFANMSLNAKPSLAFDQFPDSFVIN</sequence>
<name>TSAD_STRP3</name>